<accession>A7MMW6</accession>
<evidence type="ECO:0000255" key="1">
    <source>
        <dbReference type="HAMAP-Rule" id="MF_00555"/>
    </source>
</evidence>
<reference key="1">
    <citation type="journal article" date="2010" name="PLoS ONE">
        <title>Genome sequence of Cronobacter sakazakii BAA-894 and comparative genomic hybridization analysis with other Cronobacter species.</title>
        <authorList>
            <person name="Kucerova E."/>
            <person name="Clifton S.W."/>
            <person name="Xia X.Q."/>
            <person name="Long F."/>
            <person name="Porwollik S."/>
            <person name="Fulton L."/>
            <person name="Fronick C."/>
            <person name="Minx P."/>
            <person name="Kyung K."/>
            <person name="Warren W."/>
            <person name="Fulton R."/>
            <person name="Feng D."/>
            <person name="Wollam A."/>
            <person name="Shah N."/>
            <person name="Bhonagiri V."/>
            <person name="Nash W.E."/>
            <person name="Hallsworth-Pepin K."/>
            <person name="Wilson R.K."/>
            <person name="McClelland M."/>
            <person name="Forsythe S.J."/>
        </authorList>
    </citation>
    <scope>NUCLEOTIDE SEQUENCE [LARGE SCALE GENOMIC DNA]</scope>
    <source>
        <strain>ATCC BAA-894</strain>
    </source>
</reference>
<proteinExistence type="inferred from homology"/>
<name>ASNA_CROS8</name>
<protein>
    <recommendedName>
        <fullName evidence="1">Aspartate--ammonia ligase</fullName>
        <ecNumber evidence="1">6.3.1.1</ecNumber>
    </recommendedName>
    <alternativeName>
        <fullName evidence="1">Asparagine synthetase A</fullName>
    </alternativeName>
</protein>
<sequence>MKTAYITRQRQISFVKAHFSRLLEEKLGLLEVQAPILSRVGDGTQDNLSGCEKAVQVNVKTLPQAQFEVVHSLAKWKRKTLGQHDFSAGEGLYTHMKALRPDEDRLSPVHSVYVDQWDWERVMGDGERHLGTLKQTVESIWSAIKETELAAAERSGLTPFLPDAIHFVHSETLQRRFPELDAKGRERAIAKELGAVFLIGIGGKLADGKRHDVRAPDYDDWTTPTESGFAGLNGDILVWNPLLEDAFEISSMGIRVDADTLKRQLALTGDQDRLALEWHQALLNGEMPQTIGGGIGQSRLTMLLLQLPHIGQVQCGVWPEQVQSTVAELL</sequence>
<dbReference type="EC" id="6.3.1.1" evidence="1"/>
<dbReference type="EMBL" id="CP000783">
    <property type="protein sequence ID" value="ABU79204.1"/>
    <property type="molecule type" value="Genomic_DNA"/>
</dbReference>
<dbReference type="RefSeq" id="WP_012126198.1">
    <property type="nucleotide sequence ID" value="NC_009778.1"/>
</dbReference>
<dbReference type="SMR" id="A7MMW6"/>
<dbReference type="KEGG" id="esa:ESA_04018"/>
<dbReference type="PATRIC" id="fig|290339.8.peg.3566"/>
<dbReference type="HOGENOM" id="CLU_071543_0_0_6"/>
<dbReference type="UniPathway" id="UPA00134">
    <property type="reaction ID" value="UER00194"/>
</dbReference>
<dbReference type="Proteomes" id="UP000000260">
    <property type="component" value="Chromosome"/>
</dbReference>
<dbReference type="GO" id="GO:0005829">
    <property type="term" value="C:cytosol"/>
    <property type="evidence" value="ECO:0007669"/>
    <property type="project" value="TreeGrafter"/>
</dbReference>
<dbReference type="GO" id="GO:0004071">
    <property type="term" value="F:aspartate-ammonia ligase activity"/>
    <property type="evidence" value="ECO:0007669"/>
    <property type="project" value="UniProtKB-UniRule"/>
</dbReference>
<dbReference type="GO" id="GO:0005524">
    <property type="term" value="F:ATP binding"/>
    <property type="evidence" value="ECO:0007669"/>
    <property type="project" value="UniProtKB-UniRule"/>
</dbReference>
<dbReference type="GO" id="GO:0070981">
    <property type="term" value="P:L-asparagine biosynthetic process"/>
    <property type="evidence" value="ECO:0007669"/>
    <property type="project" value="UniProtKB-UniRule"/>
</dbReference>
<dbReference type="Gene3D" id="3.30.930.10">
    <property type="entry name" value="Bira Bifunctional Protein, Domain 2"/>
    <property type="match status" value="1"/>
</dbReference>
<dbReference type="HAMAP" id="MF_00555">
    <property type="entry name" value="AsnA"/>
    <property type="match status" value="1"/>
</dbReference>
<dbReference type="InterPro" id="IPR006195">
    <property type="entry name" value="aa-tRNA-synth_II"/>
</dbReference>
<dbReference type="InterPro" id="IPR045864">
    <property type="entry name" value="aa-tRNA-synth_II/BPL/LPL"/>
</dbReference>
<dbReference type="InterPro" id="IPR004618">
    <property type="entry name" value="AsnA"/>
</dbReference>
<dbReference type="NCBIfam" id="TIGR00669">
    <property type="entry name" value="asnA"/>
    <property type="match status" value="1"/>
</dbReference>
<dbReference type="PANTHER" id="PTHR30073">
    <property type="entry name" value="ASPARTATE--AMMONIA LIGASE"/>
    <property type="match status" value="1"/>
</dbReference>
<dbReference type="PANTHER" id="PTHR30073:SF5">
    <property type="entry name" value="ASPARTATE--AMMONIA LIGASE"/>
    <property type="match status" value="1"/>
</dbReference>
<dbReference type="Pfam" id="PF03590">
    <property type="entry name" value="AsnA"/>
    <property type="match status" value="1"/>
</dbReference>
<dbReference type="PIRSF" id="PIRSF001555">
    <property type="entry name" value="Asp_ammon_ligase"/>
    <property type="match status" value="1"/>
</dbReference>
<dbReference type="SUPFAM" id="SSF55681">
    <property type="entry name" value="Class II aaRS and biotin synthetases"/>
    <property type="match status" value="1"/>
</dbReference>
<dbReference type="PROSITE" id="PS50862">
    <property type="entry name" value="AA_TRNA_LIGASE_II"/>
    <property type="match status" value="1"/>
</dbReference>
<organism>
    <name type="scientific">Cronobacter sakazakii (strain ATCC BAA-894)</name>
    <name type="common">Enterobacter sakazakii</name>
    <dbReference type="NCBI Taxonomy" id="290339"/>
    <lineage>
        <taxon>Bacteria</taxon>
        <taxon>Pseudomonadati</taxon>
        <taxon>Pseudomonadota</taxon>
        <taxon>Gammaproteobacteria</taxon>
        <taxon>Enterobacterales</taxon>
        <taxon>Enterobacteriaceae</taxon>
        <taxon>Cronobacter</taxon>
    </lineage>
</organism>
<keyword id="KW-0028">Amino-acid biosynthesis</keyword>
<keyword id="KW-0061">Asparagine biosynthesis</keyword>
<keyword id="KW-0067">ATP-binding</keyword>
<keyword id="KW-0963">Cytoplasm</keyword>
<keyword id="KW-0436">Ligase</keyword>
<keyword id="KW-0547">Nucleotide-binding</keyword>
<keyword id="KW-1185">Reference proteome</keyword>
<gene>
    <name evidence="1" type="primary">asnA</name>
    <name type="ordered locus">ESA_04018</name>
</gene>
<feature type="chain" id="PRO_1000017944" description="Aspartate--ammonia ligase">
    <location>
        <begin position="1"/>
        <end position="330"/>
    </location>
</feature>
<comment type="catalytic activity">
    <reaction evidence="1">
        <text>L-aspartate + NH4(+) + ATP = L-asparagine + AMP + diphosphate + H(+)</text>
        <dbReference type="Rhea" id="RHEA:11372"/>
        <dbReference type="ChEBI" id="CHEBI:15378"/>
        <dbReference type="ChEBI" id="CHEBI:28938"/>
        <dbReference type="ChEBI" id="CHEBI:29991"/>
        <dbReference type="ChEBI" id="CHEBI:30616"/>
        <dbReference type="ChEBI" id="CHEBI:33019"/>
        <dbReference type="ChEBI" id="CHEBI:58048"/>
        <dbReference type="ChEBI" id="CHEBI:456215"/>
        <dbReference type="EC" id="6.3.1.1"/>
    </reaction>
</comment>
<comment type="pathway">
    <text evidence="1">Amino-acid biosynthesis; L-asparagine biosynthesis; L-asparagine from L-aspartate (ammonia route): step 1/1.</text>
</comment>
<comment type="subcellular location">
    <subcellularLocation>
        <location evidence="1">Cytoplasm</location>
    </subcellularLocation>
</comment>
<comment type="similarity">
    <text evidence="1">Belongs to the class-II aminoacyl-tRNA synthetase family. AsnA subfamily.</text>
</comment>